<dbReference type="EMBL" id="X77265">
    <property type="protein sequence ID" value="CAA54481.1"/>
    <property type="molecule type" value="mRNA"/>
</dbReference>
<dbReference type="PIR" id="B55699">
    <property type="entry name" value="B55699"/>
</dbReference>
<dbReference type="SMR" id="P43176"/>
<dbReference type="Allergome" id="89">
    <property type="allergen name" value="Bet v 1"/>
</dbReference>
<dbReference type="Allergome" id="94">
    <property type="allergen name" value="Bet v 1.0202"/>
</dbReference>
<dbReference type="GO" id="GO:0005737">
    <property type="term" value="C:cytoplasm"/>
    <property type="evidence" value="ECO:0007669"/>
    <property type="project" value="UniProtKB-SubCell"/>
</dbReference>
<dbReference type="GO" id="GO:0005634">
    <property type="term" value="C:nucleus"/>
    <property type="evidence" value="ECO:0007669"/>
    <property type="project" value="TreeGrafter"/>
</dbReference>
<dbReference type="GO" id="GO:0010427">
    <property type="term" value="F:abscisic acid binding"/>
    <property type="evidence" value="ECO:0007669"/>
    <property type="project" value="InterPro"/>
</dbReference>
<dbReference type="GO" id="GO:0004864">
    <property type="term" value="F:protein phosphatase inhibitor activity"/>
    <property type="evidence" value="ECO:0007669"/>
    <property type="project" value="InterPro"/>
</dbReference>
<dbReference type="GO" id="GO:0038023">
    <property type="term" value="F:signaling receptor activity"/>
    <property type="evidence" value="ECO:0007669"/>
    <property type="project" value="InterPro"/>
</dbReference>
<dbReference type="GO" id="GO:0009738">
    <property type="term" value="P:abscisic acid-activated signaling pathway"/>
    <property type="evidence" value="ECO:0007669"/>
    <property type="project" value="InterPro"/>
</dbReference>
<dbReference type="GO" id="GO:0006952">
    <property type="term" value="P:defense response"/>
    <property type="evidence" value="ECO:0007669"/>
    <property type="project" value="UniProtKB-KW"/>
</dbReference>
<dbReference type="CDD" id="cd07816">
    <property type="entry name" value="Bet_v1-like"/>
    <property type="match status" value="1"/>
</dbReference>
<dbReference type="FunFam" id="3.30.530.20:FF:000007">
    <property type="entry name" value="Major pollen allergen Bet v 1-A"/>
    <property type="match status" value="1"/>
</dbReference>
<dbReference type="Gene3D" id="3.30.530.20">
    <property type="match status" value="1"/>
</dbReference>
<dbReference type="InterPro" id="IPR000916">
    <property type="entry name" value="Bet_v_I/MLP"/>
</dbReference>
<dbReference type="InterPro" id="IPR024949">
    <property type="entry name" value="Bet_v_I_allergen"/>
</dbReference>
<dbReference type="InterPro" id="IPR050279">
    <property type="entry name" value="Plant_def-hormone_signal"/>
</dbReference>
<dbReference type="InterPro" id="IPR023393">
    <property type="entry name" value="START-like_dom_sf"/>
</dbReference>
<dbReference type="PANTHER" id="PTHR31213">
    <property type="entry name" value="OS08G0374000 PROTEIN-RELATED"/>
    <property type="match status" value="1"/>
</dbReference>
<dbReference type="PANTHER" id="PTHR31213:SF55">
    <property type="entry name" value="STRESS-INDUCED PROTEIN SAM22"/>
    <property type="match status" value="1"/>
</dbReference>
<dbReference type="Pfam" id="PF00407">
    <property type="entry name" value="Bet_v_1"/>
    <property type="match status" value="1"/>
</dbReference>
<dbReference type="PRINTS" id="PR00634">
    <property type="entry name" value="BETALLERGEN"/>
</dbReference>
<dbReference type="SUPFAM" id="SSF55961">
    <property type="entry name" value="Bet v1-like"/>
    <property type="match status" value="1"/>
</dbReference>
<dbReference type="PROSITE" id="PS00451">
    <property type="entry name" value="PATHOGENESIS_BETVI"/>
    <property type="match status" value="1"/>
</dbReference>
<gene>
    <name type="primary">BETV1C</name>
</gene>
<evidence type="ECO:0000250" key="1"/>
<evidence type="ECO:0000250" key="2">
    <source>
        <dbReference type="UniProtKB" id="P43185"/>
    </source>
</evidence>
<evidence type="ECO:0000305" key="3"/>
<accession>P43176</accession>
<protein>
    <recommendedName>
        <fullName>Major pollen allergen Bet v 1-C</fullName>
    </recommendedName>
    <alternativeName>
        <fullName>Allergen Bet v I-C</fullName>
    </alternativeName>
    <allergenName>Bet v 1-C</allergenName>
</protein>
<sequence length="160" mass="17514">MGVFNYESETTSVIPAARLFKAFILEGDTLIPKVAPQAISSVENIEGNGGPGTIKKITFPEGSPFKYVKERVDEVDHANFKYSYSMIEGGALGDTLEKICNEIKIVATPDGGSILKISNKYHTKGDQEMKAEHMKAIKEKGEALLRAVESYLLAHSDAYN</sequence>
<proteinExistence type="evidence at protein level"/>
<comment type="function">
    <text evidence="1">May be a general steroid carrier protein.</text>
</comment>
<comment type="subcellular location">
    <subcellularLocation>
        <location>Cytoplasm</location>
    </subcellularLocation>
</comment>
<comment type="allergen">
    <text>Causes an allergic reaction in human. Is a cause of type I allergic reactions in Europe, North America and USSR.</text>
</comment>
<comment type="similarity">
    <text evidence="3">Belongs to the BetVI family.</text>
</comment>
<name>BEV1C_BETPN</name>
<keyword id="KW-0020">Allergen</keyword>
<keyword id="KW-0963">Cytoplasm</keyword>
<keyword id="KW-0903">Direct protein sequencing</keyword>
<keyword id="KW-0568">Pathogenesis-related protein</keyword>
<keyword id="KW-0611">Plant defense</keyword>
<organism>
    <name type="scientific">Betula pendula</name>
    <name type="common">European white birch</name>
    <name type="synonym">Betula verrucosa</name>
    <dbReference type="NCBI Taxonomy" id="3505"/>
    <lineage>
        <taxon>Eukaryota</taxon>
        <taxon>Viridiplantae</taxon>
        <taxon>Streptophyta</taxon>
        <taxon>Embryophyta</taxon>
        <taxon>Tracheophyta</taxon>
        <taxon>Spermatophyta</taxon>
        <taxon>Magnoliopsida</taxon>
        <taxon>eudicotyledons</taxon>
        <taxon>Gunneridae</taxon>
        <taxon>Pentapetalae</taxon>
        <taxon>rosids</taxon>
        <taxon>fabids</taxon>
        <taxon>Fagales</taxon>
        <taxon>Betulaceae</taxon>
        <taxon>Betula</taxon>
    </lineage>
</organism>
<feature type="initiator methionine" description="Removed">
    <location>
        <position position="1"/>
    </location>
</feature>
<feature type="chain" id="PRO_0000154176" description="Major pollen allergen Bet v 1-C">
    <location>
        <begin position="2"/>
        <end position="160"/>
    </location>
</feature>
<feature type="binding site" evidence="2">
    <location>
        <position position="55"/>
    </location>
    <ligand>
        <name>brassinolide</name>
        <dbReference type="ChEBI" id="CHEBI:28277"/>
    </ligand>
</feature>
<feature type="binding site" evidence="2">
    <location>
        <position position="82"/>
    </location>
    <ligand>
        <name>brassinolide</name>
        <dbReference type="ChEBI" id="CHEBI:28277"/>
    </ligand>
</feature>
<feature type="binding site" evidence="2">
    <location>
        <position position="84"/>
    </location>
    <ligand>
        <name>brassinolide</name>
        <dbReference type="ChEBI" id="CHEBI:28277"/>
    </ligand>
</feature>
<feature type="binding site" evidence="2">
    <location>
        <position position="101"/>
    </location>
    <ligand>
        <name>brassinolide</name>
        <dbReference type="ChEBI" id="CHEBI:28277"/>
    </ligand>
</feature>
<reference key="1">
    <citation type="journal article" date="1995" name="J. Biol. Chem.">
        <title>Isoforms of Bet v 1, the major birch pollen allergen, analyzed by liquid chromatography, mass spectrometry, and cDNA cloning.</title>
        <authorList>
            <person name="Swoboda I."/>
            <person name="Jilek A."/>
            <person name="Ferreira F."/>
            <person name="Engel E."/>
            <person name="Hoffman-Sommergruber K."/>
            <person name="Scheiner O."/>
            <person name="Kraft D."/>
            <person name="Breiteneder H."/>
            <person name="Pittenauer E."/>
            <person name="Schmid E."/>
            <person name="Vicente O."/>
            <person name="Heberle-Bors E."/>
            <person name="Ahorn H."/>
            <person name="Breitenbach M."/>
        </authorList>
    </citation>
    <scope>NUCLEOTIDE SEQUENCE [MRNA]</scope>
    <scope>PARTIAL PROTEIN SEQUENCE</scope>
    <source>
        <tissue>Pollen</tissue>
    </source>
</reference>